<organism>
    <name type="scientific">Pseudomonas fluorescens (strain ATCC BAA-477 / NRRL B-23932 / Pf-5)</name>
    <dbReference type="NCBI Taxonomy" id="220664"/>
    <lineage>
        <taxon>Bacteria</taxon>
        <taxon>Pseudomonadati</taxon>
        <taxon>Pseudomonadota</taxon>
        <taxon>Gammaproteobacteria</taxon>
        <taxon>Pseudomonadales</taxon>
        <taxon>Pseudomonadaceae</taxon>
        <taxon>Pseudomonas</taxon>
    </lineage>
</organism>
<keyword id="KW-0408">Iron</keyword>
<reference key="1">
    <citation type="journal article" date="2005" name="Nat. Biotechnol.">
        <title>Complete genome sequence of the plant commensal Pseudomonas fluorescens Pf-5.</title>
        <authorList>
            <person name="Paulsen I.T."/>
            <person name="Press C.M."/>
            <person name="Ravel J."/>
            <person name="Kobayashi D.Y."/>
            <person name="Myers G.S.A."/>
            <person name="Mavrodi D.V."/>
            <person name="DeBoy R.T."/>
            <person name="Seshadri R."/>
            <person name="Ren Q."/>
            <person name="Madupu R."/>
            <person name="Dodson R.J."/>
            <person name="Durkin A.S."/>
            <person name="Brinkac L.M."/>
            <person name="Daugherty S.C."/>
            <person name="Sullivan S.A."/>
            <person name="Rosovitz M.J."/>
            <person name="Gwinn M.L."/>
            <person name="Zhou L."/>
            <person name="Schneider D.J."/>
            <person name="Cartinhour S.W."/>
            <person name="Nelson W.C."/>
            <person name="Weidman J."/>
            <person name="Watkins K."/>
            <person name="Tran K."/>
            <person name="Khouri H."/>
            <person name="Pierson E.A."/>
            <person name="Pierson L.S. III"/>
            <person name="Thomashow L.S."/>
            <person name="Loper J.E."/>
        </authorList>
    </citation>
    <scope>NUCLEOTIDE SEQUENCE [LARGE SCALE GENOMIC DNA]</scope>
    <source>
        <strain>ATCC BAA-477 / NRRL B-23932 / Pf-5</strain>
    </source>
</reference>
<name>FETP_PSEF5</name>
<protein>
    <recommendedName>
        <fullName evidence="1">Probable Fe(2+)-trafficking protein</fullName>
    </recommendedName>
</protein>
<gene>
    <name type="ordered locus">PFL_0357</name>
</gene>
<sequence>MTRTVMCRKYQEELPGLERPPYPGAKGQDIFDHVSAKAWADWQKHQTLLINEKRLNMMNADDRKYLQGEMDKFFSGEEYAKADGYVPPAE</sequence>
<comment type="function">
    <text evidence="1">Could be a mediator in iron transactions between iron acquisition and iron-requiring processes, such as synthesis and/or repair of Fe-S clusters in biosynthetic enzymes.</text>
</comment>
<comment type="similarity">
    <text evidence="1">Belongs to the Fe(2+)-trafficking protein family.</text>
</comment>
<evidence type="ECO:0000255" key="1">
    <source>
        <dbReference type="HAMAP-Rule" id="MF_00686"/>
    </source>
</evidence>
<proteinExistence type="inferred from homology"/>
<accession>Q4KJT2</accession>
<dbReference type="EMBL" id="CP000076">
    <property type="protein sequence ID" value="AAY95766.1"/>
    <property type="molecule type" value="Genomic_DNA"/>
</dbReference>
<dbReference type="RefSeq" id="WP_011058732.1">
    <property type="nucleotide sequence ID" value="NC_004129.6"/>
</dbReference>
<dbReference type="SMR" id="Q4KJT2"/>
<dbReference type="STRING" id="220664.PFL_0357"/>
<dbReference type="KEGG" id="pfl:PFL_0357"/>
<dbReference type="PATRIC" id="fig|220664.5.peg.365"/>
<dbReference type="eggNOG" id="COG2924">
    <property type="taxonomic scope" value="Bacteria"/>
</dbReference>
<dbReference type="HOGENOM" id="CLU_170994_0_0_6"/>
<dbReference type="Proteomes" id="UP000008540">
    <property type="component" value="Chromosome"/>
</dbReference>
<dbReference type="GO" id="GO:0005829">
    <property type="term" value="C:cytosol"/>
    <property type="evidence" value="ECO:0007669"/>
    <property type="project" value="TreeGrafter"/>
</dbReference>
<dbReference type="GO" id="GO:0005506">
    <property type="term" value="F:iron ion binding"/>
    <property type="evidence" value="ECO:0007669"/>
    <property type="project" value="UniProtKB-UniRule"/>
</dbReference>
<dbReference type="GO" id="GO:0034599">
    <property type="term" value="P:cellular response to oxidative stress"/>
    <property type="evidence" value="ECO:0007669"/>
    <property type="project" value="TreeGrafter"/>
</dbReference>
<dbReference type="FunFam" id="1.10.3880.10:FF:000001">
    <property type="entry name" value="Probable Fe(2+)-trafficking protein"/>
    <property type="match status" value="1"/>
</dbReference>
<dbReference type="Gene3D" id="1.10.3880.10">
    <property type="entry name" value="Fe(II) trafficking protein YggX"/>
    <property type="match status" value="1"/>
</dbReference>
<dbReference type="HAMAP" id="MF_00686">
    <property type="entry name" value="Fe_traffic_YggX"/>
    <property type="match status" value="1"/>
</dbReference>
<dbReference type="InterPro" id="IPR007457">
    <property type="entry name" value="Fe_traffick_prot_YggX"/>
</dbReference>
<dbReference type="InterPro" id="IPR036766">
    <property type="entry name" value="Fe_traffick_prot_YggX_sf"/>
</dbReference>
<dbReference type="NCBIfam" id="NF003817">
    <property type="entry name" value="PRK05408.1"/>
    <property type="match status" value="1"/>
</dbReference>
<dbReference type="PANTHER" id="PTHR36965">
    <property type="entry name" value="FE(2+)-TRAFFICKING PROTEIN-RELATED"/>
    <property type="match status" value="1"/>
</dbReference>
<dbReference type="PANTHER" id="PTHR36965:SF1">
    <property type="entry name" value="FE(2+)-TRAFFICKING PROTEIN-RELATED"/>
    <property type="match status" value="1"/>
</dbReference>
<dbReference type="Pfam" id="PF04362">
    <property type="entry name" value="Iron_traffic"/>
    <property type="match status" value="1"/>
</dbReference>
<dbReference type="PIRSF" id="PIRSF029827">
    <property type="entry name" value="Fe_traffic_YggX"/>
    <property type="match status" value="1"/>
</dbReference>
<dbReference type="SUPFAM" id="SSF111148">
    <property type="entry name" value="YggX-like"/>
    <property type="match status" value="1"/>
</dbReference>
<feature type="chain" id="PRO_0000246106" description="Probable Fe(2+)-trafficking protein">
    <location>
        <begin position="1"/>
        <end position="90"/>
    </location>
</feature>